<proteinExistence type="inferred from homology"/>
<keyword id="KW-0167">Capsid protein</keyword>
<keyword id="KW-0175">Coiled coil</keyword>
<keyword id="KW-0348">Hemagglutinin</keyword>
<keyword id="KW-1032">Host cell membrane</keyword>
<keyword id="KW-1035">Host cytoplasm</keyword>
<keyword id="KW-1037">Host cytoskeleton</keyword>
<keyword id="KW-1038">Host endoplasmic reticulum</keyword>
<keyword id="KW-1043">Host membrane</keyword>
<keyword id="KW-0945">Host-virus interaction</keyword>
<keyword id="KW-0472">Membrane</keyword>
<keyword id="KW-1152">Outer capsid protein</keyword>
<keyword id="KW-1161">Viral attachment to host cell</keyword>
<keyword id="KW-1162">Viral penetration into host cytoplasm</keyword>
<keyword id="KW-1173">Viral penetration via permeabilization of host membrane</keyword>
<keyword id="KW-0946">Virion</keyword>
<keyword id="KW-1160">Virus entry into host cell</keyword>
<feature type="chain" id="PRO_0000041027" description="Outer capsid protein VP4" evidence="1">
    <location>
        <begin position="1"/>
        <end position="772"/>
    </location>
</feature>
<feature type="chain" id="PRO_0000041028" description="Outer capsid protein VP8*" evidence="1">
    <location>
        <begin position="1"/>
        <end position="232"/>
    </location>
</feature>
<feature type="chain" id="PRO_0000041029" description="Outer capsid protein VP5*" evidence="1">
    <location>
        <begin position="246"/>
        <end position="772"/>
    </location>
</feature>
<feature type="region of interest" description="Spike head" evidence="1">
    <location>
        <begin position="65"/>
        <end position="225"/>
    </location>
</feature>
<feature type="region of interest" description="Spike body and stalk (antigen domain)" evidence="1">
    <location>
        <begin position="247"/>
        <end position="478"/>
    </location>
</feature>
<feature type="region of interest" description="Hydrophobic; possible role in virus entry into host cell" evidence="1">
    <location>
        <begin position="388"/>
        <end position="408"/>
    </location>
</feature>
<feature type="region of interest" description="Spike foot" evidence="1">
    <location>
        <begin position="509"/>
        <end position="772"/>
    </location>
</feature>
<feature type="coiled-coil region" evidence="1">
    <location>
        <begin position="483"/>
        <end position="510"/>
    </location>
</feature>
<feature type="site" description="Cleavage" evidence="1">
    <location>
        <begin position="232"/>
        <end position="233"/>
    </location>
</feature>
<feature type="site" description="Cleavage" evidence="1">
    <location>
        <begin position="242"/>
        <end position="243"/>
    </location>
</feature>
<feature type="site" description="Probable cleavage" evidence="1">
    <location>
        <begin position="245"/>
        <end position="246"/>
    </location>
</feature>
<reference key="1">
    <citation type="journal article" date="1993" name="J. Gen. Virol.">
        <title>Independent segregation of the VP4 and the VP7 genes in bovine rotaviruses as confirmed by VP4 sequence analysis of G8 and G10 bovine rotavirus strains.</title>
        <authorList>
            <person name="Taniguchi K."/>
            <person name="Urasawa T."/>
            <person name="Urasawa S."/>
        </authorList>
    </citation>
    <scope>NUCLEOTIDE SEQUENCE [GENOMIC RNA]</scope>
</reference>
<organism>
    <name type="scientific">Rotavirus A (isolate RVA/Cow/Japan/KK3/1983/G10P8[11])</name>
    <name type="common">RV-A</name>
    <dbReference type="NCBI Taxonomy" id="1835657"/>
    <lineage>
        <taxon>Viruses</taxon>
        <taxon>Riboviria</taxon>
        <taxon>Orthornavirae</taxon>
        <taxon>Duplornaviricota</taxon>
        <taxon>Resentoviricetes</taxon>
        <taxon>Reovirales</taxon>
        <taxon>Sedoreoviridae</taxon>
        <taxon>Rotavirus</taxon>
        <taxon>Rotavirus A</taxon>
    </lineage>
</organism>
<protein>
    <recommendedName>
        <fullName evidence="1">Outer capsid protein VP4</fullName>
    </recommendedName>
    <alternativeName>
        <fullName evidence="1">Hemagglutinin</fullName>
    </alternativeName>
    <component>
        <recommendedName>
            <fullName evidence="1">Outer capsid protein VP8*</fullName>
        </recommendedName>
    </component>
    <component>
        <recommendedName>
            <fullName evidence="1">Outer capsid protein VP5*</fullName>
        </recommendedName>
    </component>
</protein>
<evidence type="ECO:0000255" key="1">
    <source>
        <dbReference type="HAMAP-Rule" id="MF_04132"/>
    </source>
</evidence>
<name>VP4_ROTBK</name>
<dbReference type="EMBL" id="D13393">
    <property type="status" value="NOT_ANNOTATED_CDS"/>
    <property type="molecule type" value="Genomic_RNA"/>
</dbReference>
<dbReference type="PIR" id="JQ2026">
    <property type="entry name" value="JQ2026"/>
</dbReference>
<dbReference type="SMR" id="P36308"/>
<dbReference type="GO" id="GO:0044172">
    <property type="term" value="C:host cell endoplasmic reticulum-Golgi intermediate compartment"/>
    <property type="evidence" value="ECO:0007669"/>
    <property type="project" value="UniProtKB-SubCell"/>
</dbReference>
<dbReference type="GO" id="GO:0020002">
    <property type="term" value="C:host cell plasma membrane"/>
    <property type="evidence" value="ECO:0007669"/>
    <property type="project" value="UniProtKB-SubCell"/>
</dbReference>
<dbReference type="GO" id="GO:0044168">
    <property type="term" value="C:host cell rough endoplasmic reticulum"/>
    <property type="evidence" value="ECO:0007669"/>
    <property type="project" value="UniProtKB-SubCell"/>
</dbReference>
<dbReference type="GO" id="GO:0044163">
    <property type="term" value="C:host cytoskeleton"/>
    <property type="evidence" value="ECO:0007669"/>
    <property type="project" value="UniProtKB-SubCell"/>
</dbReference>
<dbReference type="GO" id="GO:0016020">
    <property type="term" value="C:membrane"/>
    <property type="evidence" value="ECO:0007669"/>
    <property type="project" value="UniProtKB-KW"/>
</dbReference>
<dbReference type="GO" id="GO:0039624">
    <property type="term" value="C:viral outer capsid"/>
    <property type="evidence" value="ECO:0007669"/>
    <property type="project" value="UniProtKB-UniRule"/>
</dbReference>
<dbReference type="GO" id="GO:0039665">
    <property type="term" value="P:permeabilization of host organelle membrane involved in viral entry into host cell"/>
    <property type="evidence" value="ECO:0007669"/>
    <property type="project" value="UniProtKB-UniRule"/>
</dbReference>
<dbReference type="GO" id="GO:0019062">
    <property type="term" value="P:virion attachment to host cell"/>
    <property type="evidence" value="ECO:0007669"/>
    <property type="project" value="UniProtKB-UniRule"/>
</dbReference>
<dbReference type="Gene3D" id="1.20.5.170">
    <property type="match status" value="1"/>
</dbReference>
<dbReference type="Gene3D" id="2.60.120.200">
    <property type="match status" value="1"/>
</dbReference>
<dbReference type="HAMAP" id="MF_04132">
    <property type="entry name" value="Rota_A_VP4"/>
    <property type="match status" value="1"/>
</dbReference>
<dbReference type="HAMAP" id="MF_04125">
    <property type="entry name" value="Rota_VP4"/>
    <property type="match status" value="1"/>
</dbReference>
<dbReference type="InterPro" id="IPR013320">
    <property type="entry name" value="ConA-like_dom_sf"/>
</dbReference>
<dbReference type="InterPro" id="IPR042546">
    <property type="entry name" value="Rota_A_VP4"/>
</dbReference>
<dbReference type="InterPro" id="IPR035330">
    <property type="entry name" value="Rota_VP4_MID"/>
</dbReference>
<dbReference type="InterPro" id="IPR038017">
    <property type="entry name" value="Rota_VP4_MID_sf"/>
</dbReference>
<dbReference type="InterPro" id="IPR000416">
    <property type="entry name" value="VP4_concanavalin-like"/>
</dbReference>
<dbReference type="InterPro" id="IPR035329">
    <property type="entry name" value="VP4_helical"/>
</dbReference>
<dbReference type="Pfam" id="PF17477">
    <property type="entry name" value="Rota_VP4_MID"/>
    <property type="match status" value="1"/>
</dbReference>
<dbReference type="Pfam" id="PF00426">
    <property type="entry name" value="VP4_haemagglut"/>
    <property type="match status" value="1"/>
</dbReference>
<dbReference type="Pfam" id="PF17478">
    <property type="entry name" value="VP4_helical"/>
    <property type="match status" value="1"/>
</dbReference>
<dbReference type="SUPFAM" id="SSF49899">
    <property type="entry name" value="Concanavalin A-like lectins/glucanases"/>
    <property type="match status" value="1"/>
</dbReference>
<dbReference type="SUPFAM" id="SSF111379">
    <property type="entry name" value="VP4 membrane interaction domain"/>
    <property type="match status" value="1"/>
</dbReference>
<comment type="function">
    <molecule>Outer capsid protein VP4</molecule>
    <text evidence="1">Spike-forming protein that mediates virion attachment to the host epithelial cell receptors and plays a major role in cell penetration, determination of host range restriction and virulence. Rotavirus attachment and entry into the host cell probably involves multiple sequential contacts between the outer capsid proteins VP4 and VP7, and the cell receptors. It is subsequently lost, together with VP7, following virus entry into the host cell. Following entry into the host cell, low intracellular or intravesicular Ca(2+) concentration probably causes the calcium-stabilized VP7 trimers to dissociate from the virion. This step is probably necessary for the membrane-disrupting entry step and the release of VP4, which is locked onto the virion by VP7. During the virus exit from the host cell, VP4 seems to be required to target the newly formed virions to the host cell lipid rafts.</text>
</comment>
<comment type="function">
    <molecule>Outer capsid protein VP5*</molecule>
    <text evidence="1">Forms the spike 'foot' and 'body' and acts as a membrane permeabilization protein that mediates release of viral particles from endosomal compartments into the cytoplasm. During entry, the part of VP5* that protrudes from the virus folds back on itself and reorganizes from a local dimer to a trimer. This reorganization may be linked to membrane penetration by exposing VP5* hydrophobic region. In integrin-dependent strains, VP5* targets the integrin heterodimer ITGA2/ITGB1 for cell attachment.</text>
</comment>
<comment type="function">
    <molecule>Outer capsid protein VP8*</molecule>
    <text evidence="1">Forms the head of the spikes and mediates the recognition of specific host cell surface glycans. It is the viral hemagglutinin and an important target of neutralizing antibodies. In sialic acid-dependent strains, VP8* binds to host cell sialic acid, most probably a ganglioside, providing the initial contact. In some other strains, VP8* mediates the attachment to histo-blood group antigens (HBGAs) for viral entry.</text>
</comment>
<comment type="subunit">
    <molecule>Outer capsid protein VP4</molecule>
    <text evidence="1">Homotrimer. VP4 adopts a dimeric appearance above the capsid surface, while forming a trimeric base anchored inside the capsid layer. Only hints of the third molecule are observed above the capsid surface. It probably performs a series of molecular rearrangements during viral entry. Prior to trypsin cleavage, it is flexible. The priming trypsin cleavage triggers its rearrangement into rigid spikes with approximate two-fold symmetry of their protruding parts. After an unknown second triggering event, cleaved VP4 may undergo another rearrangement, in which two VP5* subunits fold back on themselves and join a third subunit to form a tightly associated trimer, shaped like a folded umbrella. Interacts with VP6. Interacts with VP7.</text>
</comment>
<comment type="subunit">
    <molecule>Outer capsid protein VP5*</molecule>
    <text evidence="1">Homotrimer. The trimer is coiled-coil stabilized by its C-terminus, however, its N-terminus, known as antigen domain or 'body', seems to be flexible allowing it to self-associate either as a dimer or a trimer.</text>
</comment>
<comment type="subcellular location">
    <molecule>Outer capsid protein VP4</molecule>
    <subcellularLocation>
        <location evidence="1">Virion</location>
    </subcellularLocation>
    <subcellularLocation>
        <location evidence="1">Host rough endoplasmic reticulum</location>
    </subcellularLocation>
    <subcellularLocation>
        <location evidence="1">Host cell membrane</location>
    </subcellularLocation>
    <subcellularLocation>
        <location evidence="1">Host cytoplasm</location>
        <location evidence="1">Host cytoskeleton</location>
    </subcellularLocation>
    <subcellularLocation>
        <location evidence="1">Host endoplasmic reticulum-Golgi intermediate compartment</location>
    </subcellularLocation>
    <text evidence="1">The outer layer contains 180 copies of VP4, grouped as 60 dimers. Immature double-layered particles assembled in the cytoplasm bud across the membrane of the endoplasmic reticulum, acquiring during this process a transient lipid membrane that is modified with the ER resident viral glycoproteins NSP4 and VP7; these enveloped particles also contain VP4. As the particles move towards the interior of the ER cisternae, the transient lipid membrane and the non-structural protein NSP4 are lost, while the virus surface proteins VP4 and VP7 rearrange to form the outermost virus protein layer, yielding mature infectious triple-layered particles. VP4 also seems to associate with lipid rafts of the host cell membrane probably for the exit of the virus from the infected cell by an alternate pathway.</text>
</comment>
<comment type="subcellular location">
    <molecule>Outer capsid protein VP8*</molecule>
    <subcellularLocation>
        <location evidence="1">Virion</location>
    </subcellularLocation>
    <text evidence="1">Outer capsid protein.</text>
</comment>
<comment type="subcellular location">
    <molecule>Outer capsid protein VP5*</molecule>
    <subcellularLocation>
        <location evidence="1">Virion</location>
    </subcellularLocation>
    <text evidence="1">Outer capsid protein.</text>
</comment>
<comment type="domain">
    <molecule>Outer capsid protein VP4</molecule>
    <text evidence="1">The VP4 spike is divided into a foot, a stalk and body, and a head.</text>
</comment>
<comment type="PTM">
    <molecule>Outer capsid protein VP4</molecule>
    <text evidence="1">Proteolytic cleavage by trypsin results in activation of VP4 functions and greatly increases infectivity. The penetration into the host cell is dependent on trypsin treatment of VP4. It produces two peptides, VP5* and VP8* that remain associated with the virion. Cleavage of VP4 by trypsin probably occurs in vivo in the lumen of the intestine prior to infection of enterocytes. Trypsin seems to be incorporated into the three-layered viral particles but remains inactive as long as the viral outer capsid is intact and would only be activated upon the solubilization of the latter.</text>
</comment>
<comment type="miscellaneous">
    <text evidence="1">In group A rotaviruses, VP4 defines the P serotype.</text>
</comment>
<comment type="miscellaneous">
    <text evidence="1">Some rotavirus strains are neuraminidase-sensitive and require sialic acid to attach to the cell surface. Some rotavirus strains are integrin-dependent. Some rotavirus strains depend on ganglioside for their entry into the host cell. Hsp70 also seems to be involved in the entry of some strains.</text>
</comment>
<comment type="similarity">
    <text evidence="1">Belongs to the rotavirus VP4 family.</text>
</comment>
<organismHost>
    <name type="scientific">Bos taurus</name>
    <name type="common">Bovine</name>
    <dbReference type="NCBI Taxonomy" id="9913"/>
</organismHost>
<sequence length="772" mass="86470">MASLIYRQLLYNSYSVDLSDEITNIGAEKKENVTVQLGQFAQSQYAPVSWGSGETLSGNVEEQPLDGPYTPDSSNLPSNYWYLVNPSNDGVVFSVTDNSTFWMFTYLVLPNTAQTNVTVNVMNETVNISIDNSGSTYRFVDYIKTSSTQAYGSRNYLNTAHRLQAYRRDGDGNISNYWGADTQGDLRVGTYSHPVPNAVINLNADFSVIPDSQQEICTEYIRGGLPAMQTTTYVTPISYTIRSQRIVRPNEDIVISKASLWKEVQYNRDIVIRFVFANNIIKAGGLGYKWSEISYKANNYQYTYMRDGVEVVAHTIVSVNGVSVYNYNTGPLPTDFMIRNYDVLKESSFVYIDYWDDSQAFRNMVYVRSLSAELNQVRCVGGHSSFALPVGSWPVMQGGSVILTFDGVTLSTQFTDFVSLNSLRFRFRCAVSEPPFRVTGTRISNLYGFPAANPMGDQQYYEASGRFSLISLVPSNDDYQTPIANSVTVRQDLERQLDEMRKEFNELSANIALSQLIDLALLPLDMFSMFSGIQSTVEAAKTFATSVMKKFRKSDLAKSVNSLTDAITDAASSISRSSTLRSANSAVSVWTDISDIVDSTDNVVAATATAAAKKFRVKEFTTEFDGVSFDDISAAVVKTKMNKFNVVDEEILPRIITEASEKFIPNRAYRLIDGEKVYEVTTEGKSFAYLTETFEEVVFDAERFAELVTVSLVISAIIDFKTIKNLNDNYGITREQALNMLRSDPKVLRSFINQNNPIIKNRIEQLILQCRI</sequence>
<accession>P36308</accession>